<organism>
    <name type="scientific">Aliarcobacter butzleri (strain RM4018)</name>
    <name type="common">Arcobacter butzleri</name>
    <dbReference type="NCBI Taxonomy" id="367737"/>
    <lineage>
        <taxon>Bacteria</taxon>
        <taxon>Pseudomonadati</taxon>
        <taxon>Campylobacterota</taxon>
        <taxon>Epsilonproteobacteria</taxon>
        <taxon>Campylobacterales</taxon>
        <taxon>Arcobacteraceae</taxon>
        <taxon>Aliarcobacter</taxon>
    </lineage>
</organism>
<proteinExistence type="inferred from homology"/>
<protein>
    <recommendedName>
        <fullName evidence="1">Large ribosomal subunit protein uL10</fullName>
    </recommendedName>
    <alternativeName>
        <fullName evidence="2">50S ribosomal protein L10</fullName>
    </alternativeName>
</protein>
<accession>A8EVZ6</accession>
<keyword id="KW-1185">Reference proteome</keyword>
<keyword id="KW-0687">Ribonucleoprotein</keyword>
<keyword id="KW-0689">Ribosomal protein</keyword>
<keyword id="KW-0694">RNA-binding</keyword>
<keyword id="KW-0699">rRNA-binding</keyword>
<feature type="chain" id="PRO_1000059884" description="Large ribosomal subunit protein uL10">
    <location>
        <begin position="1"/>
        <end position="162"/>
    </location>
</feature>
<sequence length="162" mass="17808">MTREEKSQVIDFLTAEFKSSLAVVVCDYKGLTHKELETLRKEAKANNTKVQVAKNTLVTVAVKNAELGDIELSGTNIFLWSDDQISACKVADKFASANKEKFAIKSGIIEGQISDASKVNAFAKLPSREELLGMLASVWMGPVRNFTIGLDALRRKKEEEAA</sequence>
<reference key="1">
    <citation type="journal article" date="2007" name="PLoS ONE">
        <title>The complete genome sequence and analysis of the Epsilonproteobacterium Arcobacter butzleri.</title>
        <authorList>
            <person name="Miller W.G."/>
            <person name="Parker C.T."/>
            <person name="Rubenfield M."/>
            <person name="Mendz G.L."/>
            <person name="Woesten M.M.S.M."/>
            <person name="Ussery D.W."/>
            <person name="Stolz J.F."/>
            <person name="Binnewies T.T."/>
            <person name="Hallin P.F."/>
            <person name="Wang G."/>
            <person name="Malek J.A."/>
            <person name="Rogosin A."/>
            <person name="Stanker L.H."/>
            <person name="Mandrell R.E."/>
        </authorList>
    </citation>
    <scope>NUCLEOTIDE SEQUENCE [LARGE SCALE GENOMIC DNA]</scope>
    <source>
        <strain>RM4018</strain>
    </source>
</reference>
<comment type="function">
    <text evidence="1">Forms part of the ribosomal stalk, playing a central role in the interaction of the ribosome with GTP-bound translation factors.</text>
</comment>
<comment type="subunit">
    <text evidence="1">Part of the ribosomal stalk of the 50S ribosomal subunit. The N-terminus interacts with L11 and the large rRNA to form the base of the stalk. The C-terminus forms an elongated spine to which L12 dimers bind in a sequential fashion forming a multimeric L10(L12)X complex.</text>
</comment>
<comment type="similarity">
    <text evidence="1">Belongs to the universal ribosomal protein uL10 family.</text>
</comment>
<gene>
    <name evidence="1" type="primary">rplJ</name>
    <name type="ordered locus">Abu_1886</name>
</gene>
<evidence type="ECO:0000255" key="1">
    <source>
        <dbReference type="HAMAP-Rule" id="MF_00362"/>
    </source>
</evidence>
<evidence type="ECO:0000305" key="2"/>
<dbReference type="EMBL" id="CP000361">
    <property type="protein sequence ID" value="ABV68119.1"/>
    <property type="molecule type" value="Genomic_DNA"/>
</dbReference>
<dbReference type="RefSeq" id="WP_004511256.1">
    <property type="nucleotide sequence ID" value="NC_009850.1"/>
</dbReference>
<dbReference type="SMR" id="A8EVZ6"/>
<dbReference type="STRING" id="367737.Abu_1886"/>
<dbReference type="GeneID" id="24305650"/>
<dbReference type="KEGG" id="abu:Abu_1886"/>
<dbReference type="eggNOG" id="COG0244">
    <property type="taxonomic scope" value="Bacteria"/>
</dbReference>
<dbReference type="HOGENOM" id="CLU_092227_2_2_7"/>
<dbReference type="Proteomes" id="UP000001136">
    <property type="component" value="Chromosome"/>
</dbReference>
<dbReference type="GO" id="GO:1990904">
    <property type="term" value="C:ribonucleoprotein complex"/>
    <property type="evidence" value="ECO:0007669"/>
    <property type="project" value="UniProtKB-KW"/>
</dbReference>
<dbReference type="GO" id="GO:0005840">
    <property type="term" value="C:ribosome"/>
    <property type="evidence" value="ECO:0007669"/>
    <property type="project" value="UniProtKB-KW"/>
</dbReference>
<dbReference type="GO" id="GO:0070180">
    <property type="term" value="F:large ribosomal subunit rRNA binding"/>
    <property type="evidence" value="ECO:0007669"/>
    <property type="project" value="UniProtKB-UniRule"/>
</dbReference>
<dbReference type="GO" id="GO:0006412">
    <property type="term" value="P:translation"/>
    <property type="evidence" value="ECO:0007669"/>
    <property type="project" value="UniProtKB-UniRule"/>
</dbReference>
<dbReference type="CDD" id="cd05797">
    <property type="entry name" value="Ribosomal_L10"/>
    <property type="match status" value="1"/>
</dbReference>
<dbReference type="Gene3D" id="3.30.70.1730">
    <property type="match status" value="1"/>
</dbReference>
<dbReference type="HAMAP" id="MF_00362">
    <property type="entry name" value="Ribosomal_uL10"/>
    <property type="match status" value="1"/>
</dbReference>
<dbReference type="InterPro" id="IPR001790">
    <property type="entry name" value="Ribosomal_uL10"/>
</dbReference>
<dbReference type="InterPro" id="IPR043141">
    <property type="entry name" value="Ribosomal_uL10-like_sf"/>
</dbReference>
<dbReference type="InterPro" id="IPR022973">
    <property type="entry name" value="Ribosomal_uL10_bac"/>
</dbReference>
<dbReference type="InterPro" id="IPR047865">
    <property type="entry name" value="Ribosomal_uL10_bac_type"/>
</dbReference>
<dbReference type="NCBIfam" id="NF000955">
    <property type="entry name" value="PRK00099.1-1"/>
    <property type="match status" value="1"/>
</dbReference>
<dbReference type="PANTHER" id="PTHR11560">
    <property type="entry name" value="39S RIBOSOMAL PROTEIN L10, MITOCHONDRIAL"/>
    <property type="match status" value="1"/>
</dbReference>
<dbReference type="Pfam" id="PF00466">
    <property type="entry name" value="Ribosomal_L10"/>
    <property type="match status" value="1"/>
</dbReference>
<dbReference type="SUPFAM" id="SSF160369">
    <property type="entry name" value="Ribosomal protein L10-like"/>
    <property type="match status" value="1"/>
</dbReference>
<name>RL10_ALIB4</name>